<reference key="1">
    <citation type="submission" date="1997-07" db="EMBL/GenBank/DDBJ databases">
        <title>Nucleotide sequences of genes encoding an upper pathway of naphthalene metabolism of NPL1 plasmid from Pseudomonas putida strain BS202.</title>
        <authorList>
            <person name="Bezborodnikov S.G."/>
            <person name="Boronin A.M."/>
            <person name="Tiedje J.M."/>
        </authorList>
    </citation>
    <scope>NUCLEOTIDE SEQUENCE [GENOMIC DNA]</scope>
    <source>
        <strain>BS202</strain>
    </source>
</reference>
<evidence type="ECO:0000250" key="1"/>
<evidence type="ECO:0000255" key="2">
    <source>
        <dbReference type="PROSITE-ProRule" id="PRU01163"/>
    </source>
</evidence>
<evidence type="ECO:0000305" key="3"/>
<keyword id="KW-0058">Aromatic hydrocarbons catabolism</keyword>
<keyword id="KW-0223">Dioxygenase</keyword>
<keyword id="KW-0408">Iron</keyword>
<keyword id="KW-0479">Metal-binding</keyword>
<keyword id="KW-0560">Oxidoreductase</keyword>
<keyword id="KW-0614">Plasmid</keyword>
<keyword id="KW-0677">Repeat</keyword>
<accession>P0A109</accession>
<accession>Q57145</accession>
<comment type="function">
    <text evidence="1">Involved in the naphthalene catabolic pathway. Catalyzes the meta-cleavage of 1,2-dihydroxynaphthalene (1,2-DHN) to yield 2-hydroxychromene-2-carboxylic acid (By similarity).</text>
</comment>
<comment type="catalytic activity">
    <reaction>
        <text>naphthalene-1,2-diol + O2 = 2-hydroxychromene-2-carboxylate + H(+)</text>
        <dbReference type="Rhea" id="RHEA:27310"/>
        <dbReference type="ChEBI" id="CHEBI:15378"/>
        <dbReference type="ChEBI" id="CHEBI:15379"/>
        <dbReference type="ChEBI" id="CHEBI:17435"/>
        <dbReference type="ChEBI" id="CHEBI:59350"/>
        <dbReference type="EC" id="1.13.11.56"/>
    </reaction>
</comment>
<comment type="cofactor">
    <cofactor evidence="1">
        <name>Fe(2+)</name>
        <dbReference type="ChEBI" id="CHEBI:29033"/>
    </cofactor>
</comment>
<comment type="pathway">
    <text>Aromatic compound metabolism; naphthalene degradation.</text>
</comment>
<comment type="similarity">
    <text evidence="3">Belongs to the extradiol ring-cleavage dioxygenase family.</text>
</comment>
<proteinExistence type="inferred from homology"/>
<sequence length="302" mass="33942">MSKQAAVIELGYMGISVKDPDAWKSFATDMLGLQVLDEGEKDRFYLRMDYWHHRIVVHHNGQDDLEYLGWRVAGKPEFEALGQKLIDAGYKIRICDKVEAQERMVLGLMKTEDPGGNPTEIFWGPRIDMSNPFHPGRPLHGKFVTGDQGLGHCIVRQTDVAEAHKFYSLLGFRGDVEYRIPLPNGMTAELSFMHCNARDHSIAFGAMPAAKRLNHLMLEYTHMEDLGYTHQQFVKNEIDIALQLGIHANDKALTFYGATPSGWLIEPGWRGATAIDEAEYYVGDIFGHGVEATGYGLDVKLS</sequence>
<gene>
    <name type="primary">nahC</name>
</gene>
<name>NAHC2_PSEPU</name>
<feature type="chain" id="PRO_0000085022" description="1,2-dihydroxynaphthalene dioxygenase">
    <location>
        <begin position="1"/>
        <end position="302"/>
    </location>
</feature>
<feature type="domain" description="VOC 1" evidence="2">
    <location>
        <begin position="9"/>
        <end position="124"/>
    </location>
</feature>
<feature type="domain" description="VOC 2" evidence="2">
    <location>
        <begin position="149"/>
        <end position="270"/>
    </location>
</feature>
<feature type="binding site" evidence="1">
    <location>
        <position position="152"/>
    </location>
    <ligand>
        <name>Fe cation</name>
        <dbReference type="ChEBI" id="CHEBI:24875"/>
    </ligand>
</feature>
<feature type="binding site" evidence="1">
    <location>
        <position position="152"/>
    </location>
    <ligand>
        <name>substrate</name>
    </ligand>
</feature>
<feature type="binding site" evidence="1">
    <location>
        <begin position="199"/>
        <end position="200"/>
    </location>
    <ligand>
        <name>substrate</name>
    </ligand>
</feature>
<feature type="binding site" evidence="1">
    <location>
        <position position="215"/>
    </location>
    <ligand>
        <name>Fe cation</name>
        <dbReference type="ChEBI" id="CHEBI:24875"/>
    </ligand>
</feature>
<feature type="binding site" evidence="1">
    <location>
        <position position="215"/>
    </location>
    <ligand>
        <name>substrate</name>
    </ligand>
</feature>
<feature type="binding site" evidence="1">
    <location>
        <position position="256"/>
    </location>
    <ligand>
        <name>substrate</name>
    </ligand>
</feature>
<feature type="binding site" evidence="1">
    <location>
        <position position="266"/>
    </location>
    <ligand>
        <name>Fe cation</name>
        <dbReference type="ChEBI" id="CHEBI:24875"/>
    </ligand>
</feature>
<dbReference type="EC" id="1.13.11.56"/>
<dbReference type="EMBL" id="AF010471">
    <property type="protein sequence ID" value="AAB62711.1"/>
    <property type="molecule type" value="Genomic_DNA"/>
</dbReference>
<dbReference type="RefSeq" id="NP_863076.1">
    <property type="nucleotide sequence ID" value="NC_004999.1"/>
</dbReference>
<dbReference type="RefSeq" id="WP_011117404.1">
    <property type="nucleotide sequence ID" value="NZ_CP059053.1"/>
</dbReference>
<dbReference type="SMR" id="P0A109"/>
<dbReference type="UniPathway" id="UPA00082"/>
<dbReference type="GO" id="GO:0018554">
    <property type="term" value="F:1,2-dihydroxynaphthalene dioxygenase activity"/>
    <property type="evidence" value="ECO:0007669"/>
    <property type="project" value="UniProtKB-EC"/>
</dbReference>
<dbReference type="GO" id="GO:0008198">
    <property type="term" value="F:ferrous iron binding"/>
    <property type="evidence" value="ECO:0007669"/>
    <property type="project" value="InterPro"/>
</dbReference>
<dbReference type="GO" id="GO:0016702">
    <property type="term" value="F:oxidoreductase activity, acting on single donors with incorporation of molecular oxygen, incorporation of two atoms of oxygen"/>
    <property type="evidence" value="ECO:0000250"/>
    <property type="project" value="UniProtKB"/>
</dbReference>
<dbReference type="GO" id="GO:1901170">
    <property type="term" value="P:naphthalene catabolic process"/>
    <property type="evidence" value="ECO:0000250"/>
    <property type="project" value="UniProtKB"/>
</dbReference>
<dbReference type="CDD" id="cd07237">
    <property type="entry name" value="BphC1-RGP6_C_like"/>
    <property type="match status" value="1"/>
</dbReference>
<dbReference type="CDD" id="cd07252">
    <property type="entry name" value="BphC1-RGP6_N_like"/>
    <property type="match status" value="1"/>
</dbReference>
<dbReference type="FunFam" id="3.10.180.10:FF:000021">
    <property type="entry name" value="1,2-dihydroxynaphthalene dioxygenase"/>
    <property type="match status" value="1"/>
</dbReference>
<dbReference type="FunFam" id="3.10.180.10:FF:000027">
    <property type="entry name" value="1,2-dihydroxynaphthalene dioxygenase"/>
    <property type="match status" value="1"/>
</dbReference>
<dbReference type="Gene3D" id="3.10.180.10">
    <property type="entry name" value="2,3-Dihydroxybiphenyl 1,2-Dioxygenase, domain 1"/>
    <property type="match status" value="2"/>
</dbReference>
<dbReference type="InterPro" id="IPR029068">
    <property type="entry name" value="Glyas_Bleomycin-R_OHBP_Dase"/>
</dbReference>
<dbReference type="InterPro" id="IPR004360">
    <property type="entry name" value="Glyas_Fos-R_dOase_dom"/>
</dbReference>
<dbReference type="InterPro" id="IPR037523">
    <property type="entry name" value="VOC"/>
</dbReference>
<dbReference type="InterPro" id="IPR000486">
    <property type="entry name" value="Xdiol_ring_cleave_dOase_1/2"/>
</dbReference>
<dbReference type="Pfam" id="PF22632">
    <property type="entry name" value="BphC_D1"/>
    <property type="match status" value="1"/>
</dbReference>
<dbReference type="Pfam" id="PF00903">
    <property type="entry name" value="Glyoxalase"/>
    <property type="match status" value="1"/>
</dbReference>
<dbReference type="SUPFAM" id="SSF54593">
    <property type="entry name" value="Glyoxalase/Bleomycin resistance protein/Dihydroxybiphenyl dioxygenase"/>
    <property type="match status" value="1"/>
</dbReference>
<dbReference type="PROSITE" id="PS00082">
    <property type="entry name" value="EXTRADIOL_DIOXYGENAS"/>
    <property type="match status" value="1"/>
</dbReference>
<dbReference type="PROSITE" id="PS51819">
    <property type="entry name" value="VOC"/>
    <property type="match status" value="2"/>
</dbReference>
<organism>
    <name type="scientific">Pseudomonas putida</name>
    <name type="common">Arthrobacter siderocapsulatus</name>
    <dbReference type="NCBI Taxonomy" id="303"/>
    <lineage>
        <taxon>Bacteria</taxon>
        <taxon>Pseudomonadati</taxon>
        <taxon>Pseudomonadota</taxon>
        <taxon>Gammaproteobacteria</taxon>
        <taxon>Pseudomonadales</taxon>
        <taxon>Pseudomonadaceae</taxon>
        <taxon>Pseudomonas</taxon>
    </lineage>
</organism>
<geneLocation type="plasmid">
    <name>NPL1</name>
</geneLocation>
<protein>
    <recommendedName>
        <fullName>1,2-dihydroxynaphthalene dioxygenase</fullName>
        <shortName>1,2-DHN dioxygenase</shortName>
        <shortName>DHNDO</shortName>
        <ecNumber>1.13.11.56</ecNumber>
    </recommendedName>
    <alternativeName>
        <fullName>1,2-dihydroxynaphthalene oxygenase</fullName>
    </alternativeName>
</protein>